<feature type="chain" id="PRO_1000046001" description="Ribosomal protein L11 methyltransferase">
    <location>
        <begin position="1"/>
        <end position="300"/>
    </location>
</feature>
<feature type="binding site" evidence="1">
    <location>
        <position position="152"/>
    </location>
    <ligand>
        <name>S-adenosyl-L-methionine</name>
        <dbReference type="ChEBI" id="CHEBI:59789"/>
    </ligand>
</feature>
<feature type="binding site" evidence="1">
    <location>
        <position position="173"/>
    </location>
    <ligand>
        <name>S-adenosyl-L-methionine</name>
        <dbReference type="ChEBI" id="CHEBI:59789"/>
    </ligand>
</feature>
<feature type="binding site" evidence="1">
    <location>
        <position position="195"/>
    </location>
    <ligand>
        <name>S-adenosyl-L-methionine</name>
        <dbReference type="ChEBI" id="CHEBI:59789"/>
    </ligand>
</feature>
<feature type="binding site" evidence="1">
    <location>
        <position position="234"/>
    </location>
    <ligand>
        <name>S-adenosyl-L-methionine</name>
        <dbReference type="ChEBI" id="CHEBI:59789"/>
    </ligand>
</feature>
<name>PRMA_PARXL</name>
<accession>Q13U36</accession>
<protein>
    <recommendedName>
        <fullName evidence="1">Ribosomal protein L11 methyltransferase</fullName>
        <shortName evidence="1">L11 Mtase</shortName>
        <ecNumber evidence="1">2.1.1.-</ecNumber>
    </recommendedName>
</protein>
<comment type="function">
    <text evidence="1">Methylates ribosomal protein L11.</text>
</comment>
<comment type="catalytic activity">
    <reaction evidence="1">
        <text>L-lysyl-[protein] + 3 S-adenosyl-L-methionine = N(6),N(6),N(6)-trimethyl-L-lysyl-[protein] + 3 S-adenosyl-L-homocysteine + 3 H(+)</text>
        <dbReference type="Rhea" id="RHEA:54192"/>
        <dbReference type="Rhea" id="RHEA-COMP:9752"/>
        <dbReference type="Rhea" id="RHEA-COMP:13826"/>
        <dbReference type="ChEBI" id="CHEBI:15378"/>
        <dbReference type="ChEBI" id="CHEBI:29969"/>
        <dbReference type="ChEBI" id="CHEBI:57856"/>
        <dbReference type="ChEBI" id="CHEBI:59789"/>
        <dbReference type="ChEBI" id="CHEBI:61961"/>
    </reaction>
</comment>
<comment type="subcellular location">
    <subcellularLocation>
        <location evidence="1">Cytoplasm</location>
    </subcellularLocation>
</comment>
<comment type="similarity">
    <text evidence="1">Belongs to the methyltransferase superfamily. PrmA family.</text>
</comment>
<reference key="1">
    <citation type="journal article" date="2006" name="Proc. Natl. Acad. Sci. U.S.A.">
        <title>Burkholderia xenovorans LB400 harbors a multi-replicon, 9.73-Mbp genome shaped for versatility.</title>
        <authorList>
            <person name="Chain P.S.G."/>
            <person name="Denef V.J."/>
            <person name="Konstantinidis K.T."/>
            <person name="Vergez L.M."/>
            <person name="Agullo L."/>
            <person name="Reyes V.L."/>
            <person name="Hauser L."/>
            <person name="Cordova M."/>
            <person name="Gomez L."/>
            <person name="Gonzalez M."/>
            <person name="Land M."/>
            <person name="Lao V."/>
            <person name="Larimer F."/>
            <person name="LiPuma J.J."/>
            <person name="Mahenthiralingam E."/>
            <person name="Malfatti S.A."/>
            <person name="Marx C.J."/>
            <person name="Parnell J.J."/>
            <person name="Ramette A."/>
            <person name="Richardson P."/>
            <person name="Seeger M."/>
            <person name="Smith D."/>
            <person name="Spilker T."/>
            <person name="Sul W.J."/>
            <person name="Tsoi T.V."/>
            <person name="Ulrich L.E."/>
            <person name="Zhulin I.B."/>
            <person name="Tiedje J.M."/>
        </authorList>
    </citation>
    <scope>NUCLEOTIDE SEQUENCE [LARGE SCALE GENOMIC DNA]</scope>
    <source>
        <strain>LB400</strain>
    </source>
</reference>
<gene>
    <name evidence="1" type="primary">prmA</name>
    <name type="ordered locus">Bxeno_A3865</name>
    <name type="ORF">Bxe_A0530</name>
</gene>
<organism>
    <name type="scientific">Paraburkholderia xenovorans (strain LB400)</name>
    <dbReference type="NCBI Taxonomy" id="266265"/>
    <lineage>
        <taxon>Bacteria</taxon>
        <taxon>Pseudomonadati</taxon>
        <taxon>Pseudomonadota</taxon>
        <taxon>Betaproteobacteria</taxon>
        <taxon>Burkholderiales</taxon>
        <taxon>Burkholderiaceae</taxon>
        <taxon>Paraburkholderia</taxon>
    </lineage>
</organism>
<evidence type="ECO:0000255" key="1">
    <source>
        <dbReference type="HAMAP-Rule" id="MF_00735"/>
    </source>
</evidence>
<proteinExistence type="inferred from homology"/>
<sequence>MSYRELIAELAREHAEEFSDALLELGALSVSVEDADADTPDEQPLFGEPGLTPDRTAWQRSRVIALLAPEHEPAVLLTAAANEIGLEAAPSFTVREVEEQDWVRLTQSQFDPIKIGERIWVVPSWHDAPDPEALVLELDPGLAFGTGSHPTTRLCMEWLEQSVQPGQSVLDYGCGSGILAILAKKCGADPVYGIDIDPQAVESARHNSERNRAEVTYGLPDACPTGEFDIVVANILSNPLKLMASMLSSKVKPGGRIALSGILARQADEVAQVYARWIDISVWREHEGWVCLSGTRRESH</sequence>
<dbReference type="EC" id="2.1.1.-" evidence="1"/>
<dbReference type="EMBL" id="CP000270">
    <property type="protein sequence ID" value="ABE32403.1"/>
    <property type="molecule type" value="Genomic_DNA"/>
</dbReference>
<dbReference type="RefSeq" id="WP_011489878.1">
    <property type="nucleotide sequence ID" value="NC_007951.1"/>
</dbReference>
<dbReference type="SMR" id="Q13U36"/>
<dbReference type="STRING" id="266265.Bxe_A0530"/>
<dbReference type="KEGG" id="bxb:DR64_2705"/>
<dbReference type="KEGG" id="bxe:Bxe_A0530"/>
<dbReference type="PATRIC" id="fig|266265.5.peg.4085"/>
<dbReference type="eggNOG" id="COG2264">
    <property type="taxonomic scope" value="Bacteria"/>
</dbReference>
<dbReference type="OrthoDB" id="9785995at2"/>
<dbReference type="Proteomes" id="UP000001817">
    <property type="component" value="Chromosome 1"/>
</dbReference>
<dbReference type="GO" id="GO:0005829">
    <property type="term" value="C:cytosol"/>
    <property type="evidence" value="ECO:0007669"/>
    <property type="project" value="TreeGrafter"/>
</dbReference>
<dbReference type="GO" id="GO:0016279">
    <property type="term" value="F:protein-lysine N-methyltransferase activity"/>
    <property type="evidence" value="ECO:0007669"/>
    <property type="project" value="TreeGrafter"/>
</dbReference>
<dbReference type="GO" id="GO:0032259">
    <property type="term" value="P:methylation"/>
    <property type="evidence" value="ECO:0007669"/>
    <property type="project" value="UniProtKB-KW"/>
</dbReference>
<dbReference type="CDD" id="cd02440">
    <property type="entry name" value="AdoMet_MTases"/>
    <property type="match status" value="1"/>
</dbReference>
<dbReference type="Gene3D" id="3.40.50.150">
    <property type="entry name" value="Vaccinia Virus protein VP39"/>
    <property type="match status" value="1"/>
</dbReference>
<dbReference type="HAMAP" id="MF_00735">
    <property type="entry name" value="Methyltr_PrmA"/>
    <property type="match status" value="1"/>
</dbReference>
<dbReference type="InterPro" id="IPR050078">
    <property type="entry name" value="Ribosomal_L11_MeTrfase_PrmA"/>
</dbReference>
<dbReference type="InterPro" id="IPR004498">
    <property type="entry name" value="Ribosomal_PrmA_MeTrfase"/>
</dbReference>
<dbReference type="InterPro" id="IPR029063">
    <property type="entry name" value="SAM-dependent_MTases_sf"/>
</dbReference>
<dbReference type="NCBIfam" id="TIGR00406">
    <property type="entry name" value="prmA"/>
    <property type="match status" value="1"/>
</dbReference>
<dbReference type="PANTHER" id="PTHR43648">
    <property type="entry name" value="ELECTRON TRANSFER FLAVOPROTEIN BETA SUBUNIT LYSINE METHYLTRANSFERASE"/>
    <property type="match status" value="1"/>
</dbReference>
<dbReference type="PANTHER" id="PTHR43648:SF1">
    <property type="entry name" value="ELECTRON TRANSFER FLAVOPROTEIN BETA SUBUNIT LYSINE METHYLTRANSFERASE"/>
    <property type="match status" value="1"/>
</dbReference>
<dbReference type="Pfam" id="PF06325">
    <property type="entry name" value="PrmA"/>
    <property type="match status" value="1"/>
</dbReference>
<dbReference type="PIRSF" id="PIRSF000401">
    <property type="entry name" value="RPL11_MTase"/>
    <property type="match status" value="1"/>
</dbReference>
<dbReference type="SUPFAM" id="SSF53335">
    <property type="entry name" value="S-adenosyl-L-methionine-dependent methyltransferases"/>
    <property type="match status" value="1"/>
</dbReference>
<keyword id="KW-0963">Cytoplasm</keyword>
<keyword id="KW-0489">Methyltransferase</keyword>
<keyword id="KW-1185">Reference proteome</keyword>
<keyword id="KW-0949">S-adenosyl-L-methionine</keyword>
<keyword id="KW-0808">Transferase</keyword>